<keyword id="KW-0963">Cytoplasm</keyword>
<keyword id="KW-0254">Endocytosis</keyword>
<keyword id="KW-0472">Membrane</keyword>
<keyword id="KW-0496">Mitochondrion</keyword>
<keyword id="KW-1000">Mitochondrion outer membrane</keyword>
<keyword id="KW-1185">Reference proteome</keyword>
<keyword id="KW-0735">Signal-anchor</keyword>
<keyword id="KW-0812">Transmembrane</keyword>
<keyword id="KW-1133">Transmembrane helix</keyword>
<name>SYJ2B_BOVIN</name>
<dbReference type="EMBL" id="BC102451">
    <property type="protein sequence ID" value="AAI02452.1"/>
    <property type="molecule type" value="mRNA"/>
</dbReference>
<dbReference type="RefSeq" id="NP_001030432.1">
    <property type="nucleotide sequence ID" value="NM_001035355.2"/>
</dbReference>
<dbReference type="SMR" id="Q3T0C9"/>
<dbReference type="FunCoup" id="Q3T0C9">
    <property type="interactions" value="636"/>
</dbReference>
<dbReference type="STRING" id="9913.ENSBTAP00000020908"/>
<dbReference type="PaxDb" id="9913-ENSBTAP00000020908"/>
<dbReference type="GeneID" id="525107"/>
<dbReference type="KEGG" id="bta:525107"/>
<dbReference type="CTD" id="55333"/>
<dbReference type="eggNOG" id="KOG3528">
    <property type="taxonomic scope" value="Eukaryota"/>
</dbReference>
<dbReference type="InParanoid" id="Q3T0C9"/>
<dbReference type="OrthoDB" id="123971at2759"/>
<dbReference type="Proteomes" id="UP000009136">
    <property type="component" value="Unplaced"/>
</dbReference>
<dbReference type="GO" id="GO:0005741">
    <property type="term" value="C:mitochondrial outer membrane"/>
    <property type="evidence" value="ECO:0007669"/>
    <property type="project" value="UniProtKB-SubCell"/>
</dbReference>
<dbReference type="GO" id="GO:0048471">
    <property type="term" value="C:perinuclear region of cytoplasm"/>
    <property type="evidence" value="ECO:0007669"/>
    <property type="project" value="UniProtKB-SubCell"/>
</dbReference>
<dbReference type="GO" id="GO:0006897">
    <property type="term" value="P:endocytosis"/>
    <property type="evidence" value="ECO:0007669"/>
    <property type="project" value="UniProtKB-KW"/>
</dbReference>
<dbReference type="GO" id="GO:0016525">
    <property type="term" value="P:negative regulation of angiogenesis"/>
    <property type="evidence" value="ECO:0000250"/>
    <property type="project" value="UniProtKB"/>
</dbReference>
<dbReference type="GO" id="GO:0010596">
    <property type="term" value="P:negative regulation of endothelial cell migration"/>
    <property type="evidence" value="ECO:0000250"/>
    <property type="project" value="UniProtKB"/>
</dbReference>
<dbReference type="GO" id="GO:0001937">
    <property type="term" value="P:negative regulation of endothelial cell proliferation"/>
    <property type="evidence" value="ECO:0000250"/>
    <property type="project" value="UniProtKB"/>
</dbReference>
<dbReference type="GO" id="GO:0070373">
    <property type="term" value="P:negative regulation of ERK1 and ERK2 cascade"/>
    <property type="evidence" value="ECO:0000250"/>
    <property type="project" value="UniProtKB"/>
</dbReference>
<dbReference type="GO" id="GO:1903671">
    <property type="term" value="P:negative regulation of sprouting angiogenesis"/>
    <property type="evidence" value="ECO:0000250"/>
    <property type="project" value="UniProtKB"/>
</dbReference>
<dbReference type="GO" id="GO:0008593">
    <property type="term" value="P:regulation of Notch signaling pathway"/>
    <property type="evidence" value="ECO:0000250"/>
    <property type="project" value="UniProtKB"/>
</dbReference>
<dbReference type="CDD" id="cd06709">
    <property type="entry name" value="PDZ_SYNJ2BP-like"/>
    <property type="match status" value="1"/>
</dbReference>
<dbReference type="FunFam" id="2.30.42.10:FF:000161">
    <property type="entry name" value="Synaptojanin-2-binding protein"/>
    <property type="match status" value="1"/>
</dbReference>
<dbReference type="Gene3D" id="2.30.42.10">
    <property type="match status" value="1"/>
</dbReference>
<dbReference type="InterPro" id="IPR001478">
    <property type="entry name" value="PDZ"/>
</dbReference>
<dbReference type="InterPro" id="IPR036034">
    <property type="entry name" value="PDZ_sf"/>
</dbReference>
<dbReference type="InterPro" id="IPR050614">
    <property type="entry name" value="Synaptic_Scaffolding_LAP-MAGUK"/>
</dbReference>
<dbReference type="PANTHER" id="PTHR23119">
    <property type="entry name" value="DISCS LARGE"/>
    <property type="match status" value="1"/>
</dbReference>
<dbReference type="PANTHER" id="PTHR23119:SF51">
    <property type="entry name" value="DISKS LARGE 1 TUMOR SUPPRESSOR PROTEIN"/>
    <property type="match status" value="1"/>
</dbReference>
<dbReference type="Pfam" id="PF00595">
    <property type="entry name" value="PDZ"/>
    <property type="match status" value="1"/>
</dbReference>
<dbReference type="SMART" id="SM00228">
    <property type="entry name" value="PDZ"/>
    <property type="match status" value="1"/>
</dbReference>
<dbReference type="SUPFAM" id="SSF50156">
    <property type="entry name" value="PDZ domain-like"/>
    <property type="match status" value="1"/>
</dbReference>
<dbReference type="PROSITE" id="PS50106">
    <property type="entry name" value="PDZ"/>
    <property type="match status" value="1"/>
</dbReference>
<protein>
    <recommendedName>
        <fullName evidence="1 6">Synaptojanin-2-binding protein</fullName>
    </recommendedName>
    <alternativeName>
        <fullName evidence="2">Activin receptor-interacting protein 2</fullName>
    </alternativeName>
    <alternativeName>
        <fullName evidence="1">Mitochondrial outer membrane protein 25</fullName>
    </alternativeName>
</protein>
<organism>
    <name type="scientific">Bos taurus</name>
    <name type="common">Bovine</name>
    <dbReference type="NCBI Taxonomy" id="9913"/>
    <lineage>
        <taxon>Eukaryota</taxon>
        <taxon>Metazoa</taxon>
        <taxon>Chordata</taxon>
        <taxon>Craniata</taxon>
        <taxon>Vertebrata</taxon>
        <taxon>Euteleostomi</taxon>
        <taxon>Mammalia</taxon>
        <taxon>Eutheria</taxon>
        <taxon>Laurasiatheria</taxon>
        <taxon>Artiodactyla</taxon>
        <taxon>Ruminantia</taxon>
        <taxon>Pecora</taxon>
        <taxon>Bovidae</taxon>
        <taxon>Bovinae</taxon>
        <taxon>Bos</taxon>
    </lineage>
</organism>
<comment type="function">
    <text evidence="2">Regulates endocytosis of activin type 2 receptor kinases through the Ral/RALBP1-dependent pathway and may be involved in suppression of activin-induced signal transduction.</text>
</comment>
<comment type="subunit">
    <text evidence="1 2 3">Binds (via the PDZ domain) to isoform 2A of SYNJ2 (via the unique motif in the C-terminus) (By similarity). Interacts (via C-terminus) with RALBP1. Interacts (via PDZ domain) with ACVR2A (via C-terminus) and ACVR2B (via C-terminus). Forms a ternary complex with ACVR2A and RALBP1 (By similarity). Interacts with MAPK12 (By similarity). Interacts with DLL1; enhances DLL1 protein stability, and promotes notch signaling in endothelial cells (By similarity).</text>
</comment>
<comment type="subcellular location">
    <subcellularLocation>
        <location evidence="2 3">Mitochondrion outer membrane</location>
        <topology evidence="2 3">Single-pass type IV membrane protein</topology>
        <orientation evidence="2 3">Cytoplasmic side</orientation>
    </subcellularLocation>
    <subcellularLocation>
        <location evidence="2 3">Cytoplasm</location>
        <location evidence="2 3">Perinuclear region</location>
    </subcellularLocation>
</comment>
<reference evidence="6" key="1">
    <citation type="submission" date="2005-08" db="EMBL/GenBank/DDBJ databases">
        <authorList>
            <consortium name="NIH - Mammalian Gene Collection (MGC) project"/>
        </authorList>
    </citation>
    <scope>NUCLEOTIDE SEQUENCE [LARGE SCALE MRNA]</scope>
    <source>
        <strain evidence="6">Crossbred X Angus</strain>
        <tissue evidence="6">Ileum</tissue>
    </source>
</reference>
<sequence length="145" mass="15810">MNGRVDYLVTEEEINLTRGPSGLGFNIVGGTDQQYVSNDSGIFVSRIKENGAAALDGRLQEGDKILSVNGQDLKNLLHQDAVDLFRNAGYAVSLRVQHRLQVQNGPIGPQGEGEPSGIPIAMVLVPVFALTMVAAWAFMRYRQRL</sequence>
<proteinExistence type="evidence at transcript level"/>
<gene>
    <name evidence="6" type="primary">SYNJ2BP</name>
    <name evidence="2" type="synonym">ARIP2</name>
    <name evidence="1" type="synonym">OMP25</name>
</gene>
<accession>Q3T0C9</accession>
<evidence type="ECO:0000250" key="1">
    <source>
        <dbReference type="UniProtKB" id="P57105"/>
    </source>
</evidence>
<evidence type="ECO:0000250" key="2">
    <source>
        <dbReference type="UniProtKB" id="Q9D6K5"/>
    </source>
</evidence>
<evidence type="ECO:0000250" key="3">
    <source>
        <dbReference type="UniProtKB" id="Q9WVJ4"/>
    </source>
</evidence>
<evidence type="ECO:0000255" key="4"/>
<evidence type="ECO:0000255" key="5">
    <source>
        <dbReference type="PROSITE-ProRule" id="PRU00143"/>
    </source>
</evidence>
<evidence type="ECO:0000312" key="6">
    <source>
        <dbReference type="EMBL" id="AAI02452.1"/>
    </source>
</evidence>
<feature type="chain" id="PRO_0000375981" description="Synaptojanin-2-binding protein">
    <location>
        <begin position="1"/>
        <end position="145"/>
    </location>
</feature>
<feature type="topological domain" description="Cytoplasmic" evidence="4">
    <location>
        <begin position="1"/>
        <end position="117"/>
    </location>
</feature>
<feature type="transmembrane region" description="Helical; Anchor for type IV membrane protein" evidence="4">
    <location>
        <begin position="118"/>
        <end position="138"/>
    </location>
</feature>
<feature type="topological domain" description="Mitochondrial intermembrane" evidence="4">
    <location>
        <begin position="139"/>
        <end position="145"/>
    </location>
</feature>
<feature type="domain" description="PDZ" evidence="5">
    <location>
        <begin position="13"/>
        <end position="100"/>
    </location>
</feature>